<name>ATPF2_MARMS</name>
<feature type="chain" id="PRO_0000368578" description="ATP synthase subunit b 2">
    <location>
        <begin position="1"/>
        <end position="156"/>
    </location>
</feature>
<feature type="transmembrane region" description="Helical" evidence="1">
    <location>
        <begin position="7"/>
        <end position="29"/>
    </location>
</feature>
<protein>
    <recommendedName>
        <fullName evidence="1">ATP synthase subunit b 2</fullName>
    </recommendedName>
    <alternativeName>
        <fullName evidence="1">ATP synthase F(0) sector subunit b 2</fullName>
    </alternativeName>
    <alternativeName>
        <fullName evidence="1">ATPase subunit I 2</fullName>
    </alternativeName>
    <alternativeName>
        <fullName evidence="1">F-type ATPase subunit b 2</fullName>
        <shortName evidence="1">F-ATPase subunit b 2</shortName>
    </alternativeName>
</protein>
<keyword id="KW-0066">ATP synthesis</keyword>
<keyword id="KW-0997">Cell inner membrane</keyword>
<keyword id="KW-1003">Cell membrane</keyword>
<keyword id="KW-0138">CF(0)</keyword>
<keyword id="KW-0375">Hydrogen ion transport</keyword>
<keyword id="KW-0406">Ion transport</keyword>
<keyword id="KW-0472">Membrane</keyword>
<keyword id="KW-0812">Transmembrane</keyword>
<keyword id="KW-1133">Transmembrane helix</keyword>
<keyword id="KW-0813">Transport</keyword>
<comment type="function">
    <text evidence="1">F(1)F(0) ATP synthase produces ATP from ADP in the presence of a proton or sodium gradient. F-type ATPases consist of two structural domains, F(1) containing the extramembraneous catalytic core and F(0) containing the membrane proton channel, linked together by a central stalk and a peripheral stalk. During catalysis, ATP synthesis in the catalytic domain of F(1) is coupled via a rotary mechanism of the central stalk subunits to proton translocation.</text>
</comment>
<comment type="function">
    <text evidence="1">Component of the F(0) channel, it forms part of the peripheral stalk, linking F(1) to F(0).</text>
</comment>
<comment type="subunit">
    <text evidence="1">F-type ATPases have 2 components, F(1) - the catalytic core - and F(0) - the membrane proton channel. F(1) has five subunits: alpha(3), beta(3), gamma(1), delta(1), epsilon(1). F(0) has three main subunits: a(1), b(2) and c(10-14). The alpha and beta chains form an alternating ring which encloses part of the gamma chain. F(1) is attached to F(0) by a central stalk formed by the gamma and epsilon chains, while a peripheral stalk is formed by the delta and b chains.</text>
</comment>
<comment type="subcellular location">
    <subcellularLocation>
        <location evidence="1">Cell inner membrane</location>
        <topology evidence="1">Single-pass membrane protein</topology>
    </subcellularLocation>
</comment>
<comment type="similarity">
    <text evidence="1">Belongs to the ATPase B chain family.</text>
</comment>
<dbReference type="EMBL" id="CP000749">
    <property type="protein sequence ID" value="ABR73361.1"/>
    <property type="molecule type" value="Genomic_DNA"/>
</dbReference>
<dbReference type="SMR" id="A6W3T2"/>
<dbReference type="STRING" id="400668.Mmwyl1_4466"/>
<dbReference type="KEGG" id="mmw:Mmwyl1_4466"/>
<dbReference type="eggNOG" id="COG0711">
    <property type="taxonomic scope" value="Bacteria"/>
</dbReference>
<dbReference type="HOGENOM" id="CLU_079215_4_5_6"/>
<dbReference type="OrthoDB" id="9788020at2"/>
<dbReference type="GO" id="GO:0005886">
    <property type="term" value="C:plasma membrane"/>
    <property type="evidence" value="ECO:0007669"/>
    <property type="project" value="UniProtKB-SubCell"/>
</dbReference>
<dbReference type="GO" id="GO:0045259">
    <property type="term" value="C:proton-transporting ATP synthase complex"/>
    <property type="evidence" value="ECO:0007669"/>
    <property type="project" value="UniProtKB-KW"/>
</dbReference>
<dbReference type="GO" id="GO:0046933">
    <property type="term" value="F:proton-transporting ATP synthase activity, rotational mechanism"/>
    <property type="evidence" value="ECO:0007669"/>
    <property type="project" value="UniProtKB-UniRule"/>
</dbReference>
<dbReference type="GO" id="GO:0046961">
    <property type="term" value="F:proton-transporting ATPase activity, rotational mechanism"/>
    <property type="evidence" value="ECO:0007669"/>
    <property type="project" value="TreeGrafter"/>
</dbReference>
<dbReference type="CDD" id="cd06503">
    <property type="entry name" value="ATP-synt_Fo_b"/>
    <property type="match status" value="1"/>
</dbReference>
<dbReference type="Gene3D" id="6.10.250.1580">
    <property type="match status" value="1"/>
</dbReference>
<dbReference type="HAMAP" id="MF_01398">
    <property type="entry name" value="ATP_synth_b_bprime"/>
    <property type="match status" value="1"/>
</dbReference>
<dbReference type="InterPro" id="IPR028987">
    <property type="entry name" value="ATP_synth_B-like_membr_sf"/>
</dbReference>
<dbReference type="InterPro" id="IPR002146">
    <property type="entry name" value="ATP_synth_b/b'su_bac/chlpt"/>
</dbReference>
<dbReference type="InterPro" id="IPR005864">
    <property type="entry name" value="ATP_synth_F0_bsu_bac"/>
</dbReference>
<dbReference type="InterPro" id="IPR050059">
    <property type="entry name" value="ATP_synthase_B_chain"/>
</dbReference>
<dbReference type="NCBIfam" id="TIGR01144">
    <property type="entry name" value="ATP_synt_b"/>
    <property type="match status" value="1"/>
</dbReference>
<dbReference type="NCBIfam" id="NF004411">
    <property type="entry name" value="PRK05759.1-2"/>
    <property type="match status" value="1"/>
</dbReference>
<dbReference type="PANTHER" id="PTHR33445:SF1">
    <property type="entry name" value="ATP SYNTHASE SUBUNIT B"/>
    <property type="match status" value="1"/>
</dbReference>
<dbReference type="PANTHER" id="PTHR33445">
    <property type="entry name" value="ATP SYNTHASE SUBUNIT B', CHLOROPLASTIC"/>
    <property type="match status" value="1"/>
</dbReference>
<dbReference type="Pfam" id="PF00430">
    <property type="entry name" value="ATP-synt_B"/>
    <property type="match status" value="1"/>
</dbReference>
<dbReference type="SUPFAM" id="SSF81573">
    <property type="entry name" value="F1F0 ATP synthase subunit B, membrane domain"/>
    <property type="match status" value="1"/>
</dbReference>
<sequence>MNLNLTLLGQAISFAIFVWFCMKYVWPPVIAALEERSKKIADGLEAANRASRDLELAQEQASQILRESKENAAEIIEQANKRANQMVDEAKEQVIADGKRLREAAQAEIEQDVMRAKEALRAQVSVLAFAGAEKILGATIDEKAHSEIVEQLAKEL</sequence>
<gene>
    <name evidence="1" type="primary">atpF2</name>
    <name type="ordered locus">Mmwyl1_4466</name>
</gene>
<proteinExistence type="inferred from homology"/>
<reference key="1">
    <citation type="submission" date="2007-06" db="EMBL/GenBank/DDBJ databases">
        <title>Complete sequence of Marinomonas sp. MWYL1.</title>
        <authorList>
            <consortium name="US DOE Joint Genome Institute"/>
            <person name="Copeland A."/>
            <person name="Lucas S."/>
            <person name="Lapidus A."/>
            <person name="Barry K."/>
            <person name="Glavina del Rio T."/>
            <person name="Dalin E."/>
            <person name="Tice H."/>
            <person name="Pitluck S."/>
            <person name="Kiss H."/>
            <person name="Brettin T."/>
            <person name="Bruce D."/>
            <person name="Detter J.C."/>
            <person name="Han C."/>
            <person name="Schmutz J."/>
            <person name="Larimer F."/>
            <person name="Land M."/>
            <person name="Hauser L."/>
            <person name="Kyrpides N."/>
            <person name="Kim E."/>
            <person name="Johnston A.W.B."/>
            <person name="Todd J.D."/>
            <person name="Rogers R."/>
            <person name="Wexler M."/>
            <person name="Bond P.L."/>
            <person name="Li Y."/>
            <person name="Richardson P."/>
        </authorList>
    </citation>
    <scope>NUCLEOTIDE SEQUENCE [LARGE SCALE GENOMIC DNA]</scope>
    <source>
        <strain>MWYL1</strain>
    </source>
</reference>
<accession>A6W3T2</accession>
<evidence type="ECO:0000255" key="1">
    <source>
        <dbReference type="HAMAP-Rule" id="MF_01398"/>
    </source>
</evidence>
<organism>
    <name type="scientific">Marinomonas sp. (strain MWYL1)</name>
    <dbReference type="NCBI Taxonomy" id="400668"/>
    <lineage>
        <taxon>Bacteria</taxon>
        <taxon>Pseudomonadati</taxon>
        <taxon>Pseudomonadota</taxon>
        <taxon>Gammaproteobacteria</taxon>
        <taxon>Oceanospirillales</taxon>
        <taxon>Oceanospirillaceae</taxon>
        <taxon>Marinomonas</taxon>
    </lineage>
</organism>